<accession>P55668</accession>
<protein>
    <recommendedName>
        <fullName>Uncharacterized protein y4tN</fullName>
    </recommendedName>
</protein>
<reference key="1">
    <citation type="journal article" date="1997" name="Nature">
        <title>Molecular basis of symbiosis between Rhizobium and legumes.</title>
        <authorList>
            <person name="Freiberg C.A."/>
            <person name="Fellay R."/>
            <person name="Bairoch A."/>
            <person name="Broughton W.J."/>
            <person name="Rosenthal A."/>
            <person name="Perret X."/>
        </authorList>
    </citation>
    <scope>NUCLEOTIDE SEQUENCE [LARGE SCALE GENOMIC DNA]</scope>
    <source>
        <strain>NBRC 101917 / NGR234</strain>
    </source>
</reference>
<reference key="2">
    <citation type="journal article" date="2009" name="Appl. Environ. Microbiol.">
        <title>Rhizobium sp. strain NGR234 possesses a remarkable number of secretion systems.</title>
        <authorList>
            <person name="Schmeisser C."/>
            <person name="Liesegang H."/>
            <person name="Krysciak D."/>
            <person name="Bakkou N."/>
            <person name="Le Quere A."/>
            <person name="Wollherr A."/>
            <person name="Heinemeyer I."/>
            <person name="Morgenstern B."/>
            <person name="Pommerening-Roeser A."/>
            <person name="Flores M."/>
            <person name="Palacios R."/>
            <person name="Brenner S."/>
            <person name="Gottschalk G."/>
            <person name="Schmitz R.A."/>
            <person name="Broughton W.J."/>
            <person name="Perret X."/>
            <person name="Strittmatter A.W."/>
            <person name="Streit W.R."/>
        </authorList>
    </citation>
    <scope>NUCLEOTIDE SEQUENCE [LARGE SCALE GENOMIC DNA]</scope>
    <source>
        <strain>NBRC 101917 / NGR234</strain>
    </source>
</reference>
<proteinExistence type="predicted"/>
<name>Y4TN_SINFN</name>
<sequence>MSTSTRRVVRFRLSFASQPSPVCVFFGLNSQLLWQAAPCHVSFHLICASNNELRTKSRPRLLQDEKRAVWRRLRQFCPVVFPRIAQSMNALALRGATREGSALAFFGQLAKYLNRIGKRAEKSKPSDWEKYDVKYPNKPHSVRSVTLNAGFRRSGNHSAGNVHPASPMIKVQGG</sequence>
<gene>
    <name type="ordered locus">NGR_a01450</name>
    <name type="ORF">y4tN</name>
</gene>
<organism>
    <name type="scientific">Sinorhizobium fredii (strain NBRC 101917 / NGR234)</name>
    <dbReference type="NCBI Taxonomy" id="394"/>
    <lineage>
        <taxon>Bacteria</taxon>
        <taxon>Pseudomonadati</taxon>
        <taxon>Pseudomonadota</taxon>
        <taxon>Alphaproteobacteria</taxon>
        <taxon>Hyphomicrobiales</taxon>
        <taxon>Rhizobiaceae</taxon>
        <taxon>Sinorhizobium/Ensifer group</taxon>
        <taxon>Sinorhizobium</taxon>
    </lineage>
</organism>
<dbReference type="EMBL" id="U00090">
    <property type="protein sequence ID" value="AAB91867.1"/>
    <property type="molecule type" value="Genomic_DNA"/>
</dbReference>
<dbReference type="RefSeq" id="NP_444080.1">
    <property type="nucleotide sequence ID" value="NC_000914.2"/>
</dbReference>
<dbReference type="KEGG" id="rhi:NGR_a01450"/>
<dbReference type="HOGENOM" id="CLU_1538852_0_0_5"/>
<dbReference type="Proteomes" id="UP000001054">
    <property type="component" value="Plasmid pNGR234a"/>
</dbReference>
<geneLocation type="plasmid">
    <name>sym pNGR234a</name>
</geneLocation>
<keyword id="KW-0614">Plasmid</keyword>
<keyword id="KW-1185">Reference proteome</keyword>
<feature type="chain" id="PRO_0000200949" description="Uncharacterized protein y4tN">
    <location>
        <begin position="1"/>
        <end position="174"/>
    </location>
</feature>
<feature type="region of interest" description="Disordered" evidence="1">
    <location>
        <begin position="153"/>
        <end position="174"/>
    </location>
</feature>
<evidence type="ECO:0000256" key="1">
    <source>
        <dbReference type="SAM" id="MobiDB-lite"/>
    </source>
</evidence>